<dbReference type="EMBL" id="AP008231">
    <property type="protein sequence ID" value="BAD80601.1"/>
    <property type="molecule type" value="Genomic_DNA"/>
</dbReference>
<dbReference type="RefSeq" id="WP_011244721.1">
    <property type="nucleotide sequence ID" value="NZ_CP085785.1"/>
</dbReference>
<dbReference type="SMR" id="Q5MZB9"/>
<dbReference type="GeneID" id="72430549"/>
<dbReference type="KEGG" id="syc:syc2411_c"/>
<dbReference type="eggNOG" id="ENOG5031GDS">
    <property type="taxonomic scope" value="Bacteria"/>
</dbReference>
<dbReference type="Proteomes" id="UP000001175">
    <property type="component" value="Chromosome"/>
</dbReference>
<dbReference type="GO" id="GO:0009654">
    <property type="term" value="C:photosystem II oxygen evolving complex"/>
    <property type="evidence" value="ECO:0007669"/>
    <property type="project" value="InterPro"/>
</dbReference>
<dbReference type="GO" id="GO:0031676">
    <property type="term" value="C:plasma membrane-derived thylakoid membrane"/>
    <property type="evidence" value="ECO:0007669"/>
    <property type="project" value="UniProtKB-SubCell"/>
</dbReference>
<dbReference type="GO" id="GO:0015979">
    <property type="term" value="P:photosynthesis"/>
    <property type="evidence" value="ECO:0007669"/>
    <property type="project" value="UniProtKB-UniRule"/>
</dbReference>
<dbReference type="Gene3D" id="2.40.30.220">
    <property type="entry name" value="Photosystem II Psb28"/>
    <property type="match status" value="1"/>
</dbReference>
<dbReference type="HAMAP" id="MF_01370">
    <property type="entry name" value="PSII_Psb28"/>
    <property type="match status" value="1"/>
</dbReference>
<dbReference type="InterPro" id="IPR038676">
    <property type="entry name" value="Psb28_c1_sf"/>
</dbReference>
<dbReference type="InterPro" id="IPR005610">
    <property type="entry name" value="PSII_Psb28_class-1"/>
</dbReference>
<dbReference type="NCBIfam" id="TIGR03047">
    <property type="entry name" value="PS_II_psb28"/>
    <property type="match status" value="1"/>
</dbReference>
<dbReference type="PANTHER" id="PTHR34963">
    <property type="match status" value="1"/>
</dbReference>
<dbReference type="PANTHER" id="PTHR34963:SF2">
    <property type="entry name" value="PHOTOSYSTEM II REACTION CENTER PSB28 PROTEIN, CHLOROPLASTIC"/>
    <property type="match status" value="1"/>
</dbReference>
<dbReference type="Pfam" id="PF03912">
    <property type="entry name" value="Psb28"/>
    <property type="match status" value="1"/>
</dbReference>
<evidence type="ECO:0000255" key="1">
    <source>
        <dbReference type="HAMAP-Rule" id="MF_01370"/>
    </source>
</evidence>
<comment type="subunit">
    <text evidence="1">Part of the photosystem II complex.</text>
</comment>
<comment type="subcellular location">
    <subcellularLocation>
        <location evidence="1">Cellular thylakoid membrane</location>
        <topology evidence="1">Peripheral membrane protein</topology>
        <orientation evidence="1">Cytoplasmic side</orientation>
    </subcellularLocation>
</comment>
<comment type="similarity">
    <text evidence="1">Belongs to the Psb28 family.</text>
</comment>
<gene>
    <name evidence="1" type="primary">psb28</name>
    <name type="ordered locus">syc2411_c</name>
</gene>
<feature type="chain" id="PRO_0000271570" description="Photosystem II reaction center Psb28 protein">
    <location>
        <begin position="1"/>
        <end position="112"/>
    </location>
</feature>
<name>PSB28_SYNP6</name>
<accession>Q5MZB9</accession>
<organism>
    <name type="scientific">Synechococcus sp. (strain ATCC 27144 / PCC 6301 / SAUG 1402/1)</name>
    <name type="common">Anacystis nidulans</name>
    <dbReference type="NCBI Taxonomy" id="269084"/>
    <lineage>
        <taxon>Bacteria</taxon>
        <taxon>Bacillati</taxon>
        <taxon>Cyanobacteriota</taxon>
        <taxon>Cyanophyceae</taxon>
        <taxon>Synechococcales</taxon>
        <taxon>Synechococcaceae</taxon>
        <taxon>Synechococcus</taxon>
    </lineage>
</organism>
<protein>
    <recommendedName>
        <fullName evidence="1">Photosystem II reaction center Psb28 protein</fullName>
    </recommendedName>
    <alternativeName>
        <fullName evidence="1">Photosystem II 13 kDa protein</fullName>
    </alternativeName>
    <alternativeName>
        <fullName evidence="1">Photosystem II reaction center W protein</fullName>
    </alternativeName>
</protein>
<keyword id="KW-0472">Membrane</keyword>
<keyword id="KW-0602">Photosynthesis</keyword>
<keyword id="KW-0604">Photosystem II</keyword>
<keyword id="KW-0793">Thylakoid</keyword>
<reference key="1">
    <citation type="journal article" date="2007" name="Photosyn. Res.">
        <title>Complete nucleotide sequence of the freshwater unicellular cyanobacterium Synechococcus elongatus PCC 6301 chromosome: gene content and organization.</title>
        <authorList>
            <person name="Sugita C."/>
            <person name="Ogata K."/>
            <person name="Shikata M."/>
            <person name="Jikuya H."/>
            <person name="Takano J."/>
            <person name="Furumichi M."/>
            <person name="Kanehisa M."/>
            <person name="Omata T."/>
            <person name="Sugiura M."/>
            <person name="Sugita M."/>
        </authorList>
    </citation>
    <scope>NUCLEOTIDE SEQUENCE [LARGE SCALE GENOMIC DNA]</scope>
    <source>
        <strain>ATCC 27144 / PCC 6301 / SAUG 1402/1</strain>
    </source>
</reference>
<proteinExistence type="inferred from homology"/>
<sequence length="112" mass="12672">MSAAIQFTRGIDEPVVPDVRLTRSRDGQNGTATFYFDEPQALVGEVRQDITGMYLLDDEGELATREVKAKFINGQPAGLEAVYLMRSPEEWDRFMRFMQRYAEANGLGFTEA</sequence>